<gene>
    <name type="primary">Dclre1b</name>
    <name type="synonym">Snm1b</name>
</gene>
<feature type="chain" id="PRO_0000398626" description="5' exonuclease Apollo">
    <location>
        <begin position="1"/>
        <end position="541"/>
    </location>
</feature>
<feature type="region of interest" description="Disordered" evidence="3">
    <location>
        <begin position="350"/>
        <end position="375"/>
    </location>
</feature>
<feature type="region of interest" description="Disordered" evidence="3">
    <location>
        <begin position="450"/>
        <end position="489"/>
    </location>
</feature>
<feature type="short sequence motif" description="TBM">
    <location>
        <begin position="492"/>
        <end position="507"/>
    </location>
</feature>
<feature type="compositionally biased region" description="Basic and acidic residues" evidence="3">
    <location>
        <begin position="358"/>
        <end position="371"/>
    </location>
</feature>
<feature type="cross-link" description="Glycyl lysine isopeptide (Lys-Gly) (interchain with G-Cter in SUMO2)" evidence="2">
    <location>
        <position position="334"/>
    </location>
</feature>
<name>DCR1B_RAT</name>
<comment type="function">
    <text evidence="1">5'-3' exonuclease that plays a central role in telomere maintenance and protection during S-phase. Participates in the protection of telomeres against non-homologous end-joining (NHEJ)-mediated repair, thereby ensuring that telomeres do not fuse. Plays a key role in telomeric loop (T loop) formation by being recruited by TERF2 at the leading end telomeres and by processing leading-end telomeres immediately after their replication via its exonuclease activity: generates 3' single-stranded overhang at the leading end telomeres avoiding blunt leading-end telomeres that are vulnerable to end-joining reactions and expose the telomere end in a manner that activates the DNA repair pathways. Together with TERF2, required to protect telomeres from replicative damage during replication by controlling the amount of DNA topoisomerase (TOP1, TOP2A and TOP2B) needed for telomere replication during fork passage and prevent aberrant telomere topology. Also involved in response to DNA damage: plays a role in response to DNA interstrand cross-links (ICLs) by facilitating double-strand break formation. In case of spindle stress, involved in prophase checkpoint (By similarity). Possesses beta-lactamase activity, catalyzing the hydrolysis of penicillin G and nitrocefin (By similarity). Exhibits no activity towards other beta-lactam antibiotic classes including cephalosporins (cefotaxime) and carbapenems (imipenem) (By similarity).</text>
</comment>
<comment type="catalytic activity">
    <reaction evidence="2">
        <text>a beta-lactam + H2O = a substituted beta-amino acid</text>
        <dbReference type="Rhea" id="RHEA:20401"/>
        <dbReference type="ChEBI" id="CHEBI:15377"/>
        <dbReference type="ChEBI" id="CHEBI:35627"/>
        <dbReference type="ChEBI" id="CHEBI:140347"/>
        <dbReference type="EC" id="3.5.2.6"/>
    </reaction>
</comment>
<comment type="subunit">
    <text evidence="1">Interacts with TERF2; the interaction is direct. Interacts with MUS81, MRE11 and FANCD2. Interacts with HSPA2, HSPA8 and HSPA14. Interacts with SPAG5 (By similarity).</text>
</comment>
<comment type="subcellular location">
    <subcellularLocation>
        <location evidence="1">Chromosome</location>
        <location evidence="1">Telomere</location>
    </subcellularLocation>
    <subcellularLocation>
        <location evidence="1">Nucleus</location>
    </subcellularLocation>
    <subcellularLocation>
        <location evidence="1">Cytoplasm</location>
        <location evidence="1">Cytoskeleton</location>
        <location evidence="1">Microtubule organizing center</location>
        <location evidence="1">Centrosome</location>
    </subcellularLocation>
    <text evidence="1">Mainly localizes to telomeres, recruited via its interaction with TERF2. During mitosis, localizes to the centrosome (By similarity).</text>
</comment>
<comment type="domain">
    <text evidence="1">The TBM domain mediates interaction with TERF2.</text>
</comment>
<comment type="PTM">
    <text evidence="1">Ubiquitinated, leading to its degradation. Interaction with TERF2 protects it from ubiquitination (By similarity).</text>
</comment>
<comment type="similarity">
    <text evidence="4">Belongs to the DNA repair metallo-beta-lactamase (DRMBL) family.</text>
</comment>
<comment type="sequence caution" evidence="4">
    <conflict type="frameshift">
        <sequence resource="EMBL-CDS" id="AAH98939"/>
    </conflict>
</comment>
<evidence type="ECO:0000250" key="1"/>
<evidence type="ECO:0000250" key="2">
    <source>
        <dbReference type="UniProtKB" id="Q9H816"/>
    </source>
</evidence>
<evidence type="ECO:0000256" key="3">
    <source>
        <dbReference type="SAM" id="MobiDB-lite"/>
    </source>
</evidence>
<evidence type="ECO:0000305" key="4"/>
<reference key="1">
    <citation type="journal article" date="2004" name="Genome Res.">
        <title>The status, quality, and expansion of the NIH full-length cDNA project: the Mammalian Gene Collection (MGC).</title>
        <authorList>
            <consortium name="The MGC Project Team"/>
        </authorList>
    </citation>
    <scope>NUCLEOTIDE SEQUENCE [LARGE SCALE MRNA]</scope>
    <source>
        <tissue>Testis</tissue>
    </source>
</reference>
<reference key="2">
    <citation type="journal article" date="2012" name="Nat. Commun.">
        <title>Quantitative maps of protein phosphorylation sites across 14 different rat organs and tissues.</title>
        <authorList>
            <person name="Lundby A."/>
            <person name="Secher A."/>
            <person name="Lage K."/>
            <person name="Nordsborg N.B."/>
            <person name="Dmytriyev A."/>
            <person name="Lundby C."/>
            <person name="Olsen J.V."/>
        </authorList>
    </citation>
    <scope>IDENTIFICATION BY MASS SPECTROMETRY [LARGE SCALE ANALYSIS]</scope>
</reference>
<accession>Q4KLY6</accession>
<dbReference type="EC" id="3.1.-.-"/>
<dbReference type="EC" id="3.5.2.6" evidence="2"/>
<dbReference type="EMBL" id="BC098939">
    <property type="protein sequence ID" value="AAH98939.1"/>
    <property type="status" value="ALT_FRAME"/>
    <property type="molecule type" value="mRNA"/>
</dbReference>
<dbReference type="RefSeq" id="NP_001020858.1">
    <property type="nucleotide sequence ID" value="NM_001025687.1"/>
</dbReference>
<dbReference type="SMR" id="Q4KLY6"/>
<dbReference type="FunCoup" id="Q4KLY6">
    <property type="interactions" value="1681"/>
</dbReference>
<dbReference type="STRING" id="10116.ENSRNOP00000072954"/>
<dbReference type="PhosphoSitePlus" id="Q4KLY6"/>
<dbReference type="PaxDb" id="10116-ENSRNOP00000026213"/>
<dbReference type="GeneID" id="310745"/>
<dbReference type="KEGG" id="rno:310745"/>
<dbReference type="UCSC" id="RGD:1310343">
    <property type="organism name" value="rat"/>
</dbReference>
<dbReference type="AGR" id="RGD:1310343"/>
<dbReference type="CTD" id="64858"/>
<dbReference type="RGD" id="1310343">
    <property type="gene designation" value="Dclre1b"/>
</dbReference>
<dbReference type="eggNOG" id="KOG1361">
    <property type="taxonomic scope" value="Eukaryota"/>
</dbReference>
<dbReference type="InParanoid" id="Q4KLY6"/>
<dbReference type="PhylomeDB" id="Q4KLY6"/>
<dbReference type="Reactome" id="R-RNO-6783310">
    <property type="pathway name" value="Fanconi Anemia Pathway"/>
</dbReference>
<dbReference type="PRO" id="PR:Q4KLY6"/>
<dbReference type="Proteomes" id="UP000002494">
    <property type="component" value="Unplaced"/>
</dbReference>
<dbReference type="GO" id="GO:0005813">
    <property type="term" value="C:centrosome"/>
    <property type="evidence" value="ECO:0000250"/>
    <property type="project" value="UniProtKB"/>
</dbReference>
<dbReference type="GO" id="GO:0000781">
    <property type="term" value="C:chromosome, telomeric region"/>
    <property type="evidence" value="ECO:0000250"/>
    <property type="project" value="UniProtKB"/>
</dbReference>
<dbReference type="GO" id="GO:0005737">
    <property type="term" value="C:cytoplasm"/>
    <property type="evidence" value="ECO:0007669"/>
    <property type="project" value="UniProtKB-KW"/>
</dbReference>
<dbReference type="GO" id="GO:0005634">
    <property type="term" value="C:nucleus"/>
    <property type="evidence" value="ECO:0007669"/>
    <property type="project" value="UniProtKB-SubCell"/>
</dbReference>
<dbReference type="GO" id="GO:0035312">
    <property type="term" value="F:5'-3' DNA exonuclease activity"/>
    <property type="evidence" value="ECO:0000318"/>
    <property type="project" value="GO_Central"/>
</dbReference>
<dbReference type="GO" id="GO:0008409">
    <property type="term" value="F:5'-3' exonuclease activity"/>
    <property type="evidence" value="ECO:0000250"/>
    <property type="project" value="UniProtKB"/>
</dbReference>
<dbReference type="GO" id="GO:0008800">
    <property type="term" value="F:beta-lactamase activity"/>
    <property type="evidence" value="ECO:0000250"/>
    <property type="project" value="UniProtKB"/>
</dbReference>
<dbReference type="GO" id="GO:0003684">
    <property type="term" value="F:damaged DNA binding"/>
    <property type="evidence" value="ECO:0000318"/>
    <property type="project" value="GO_Central"/>
</dbReference>
<dbReference type="GO" id="GO:0042803">
    <property type="term" value="F:protein homodimerization activity"/>
    <property type="evidence" value="ECO:0000266"/>
    <property type="project" value="RGD"/>
</dbReference>
<dbReference type="GO" id="GO:0044877">
    <property type="term" value="F:protein-containing complex binding"/>
    <property type="evidence" value="ECO:0000266"/>
    <property type="project" value="RGD"/>
</dbReference>
<dbReference type="GO" id="GO:0006303">
    <property type="term" value="P:double-strand break repair via nonhomologous end joining"/>
    <property type="evidence" value="ECO:0000318"/>
    <property type="project" value="GO_Central"/>
</dbReference>
<dbReference type="GO" id="GO:0036297">
    <property type="term" value="P:interstrand cross-link repair"/>
    <property type="evidence" value="ECO:0000266"/>
    <property type="project" value="RGD"/>
</dbReference>
<dbReference type="GO" id="GO:0031848">
    <property type="term" value="P:protection from non-homologous end joining at telomere"/>
    <property type="evidence" value="ECO:0000250"/>
    <property type="project" value="UniProtKB"/>
</dbReference>
<dbReference type="GO" id="GO:0016233">
    <property type="term" value="P:telomere capping"/>
    <property type="evidence" value="ECO:0000266"/>
    <property type="project" value="RGD"/>
</dbReference>
<dbReference type="GO" id="GO:0000723">
    <property type="term" value="P:telomere maintenance"/>
    <property type="evidence" value="ECO:0000250"/>
    <property type="project" value="UniProtKB"/>
</dbReference>
<dbReference type="GO" id="GO:0010833">
    <property type="term" value="P:telomere maintenance via telomere lengthening"/>
    <property type="evidence" value="ECO:0000266"/>
    <property type="project" value="RGD"/>
</dbReference>
<dbReference type="GO" id="GO:0031860">
    <property type="term" value="P:telomeric 3' overhang formation"/>
    <property type="evidence" value="ECO:0000250"/>
    <property type="project" value="UniProtKB"/>
</dbReference>
<dbReference type="GO" id="GO:0031627">
    <property type="term" value="P:telomeric loop formation"/>
    <property type="evidence" value="ECO:0000250"/>
    <property type="project" value="UniProtKB"/>
</dbReference>
<dbReference type="CDD" id="cd16273">
    <property type="entry name" value="SNM1A-1C-like_MBL-fold"/>
    <property type="match status" value="1"/>
</dbReference>
<dbReference type="FunFam" id="3.40.50.12650:FF:000003">
    <property type="entry name" value="DNA cross-link repair 1B"/>
    <property type="match status" value="1"/>
</dbReference>
<dbReference type="FunFam" id="3.60.15.10:FF:000022">
    <property type="entry name" value="DNA cross-link repair 1B"/>
    <property type="match status" value="1"/>
</dbReference>
<dbReference type="Gene3D" id="3.40.50.12650">
    <property type="match status" value="1"/>
</dbReference>
<dbReference type="Gene3D" id="3.60.15.10">
    <property type="entry name" value="Ribonuclease Z/Hydroxyacylglutathione hydrolase-like"/>
    <property type="match status" value="1"/>
</dbReference>
<dbReference type="InterPro" id="IPR011084">
    <property type="entry name" value="DRMBL"/>
</dbReference>
<dbReference type="InterPro" id="IPR036866">
    <property type="entry name" value="RibonucZ/Hydroxyglut_hydro"/>
</dbReference>
<dbReference type="PANTHER" id="PTHR23240:SF26">
    <property type="entry name" value="5' EXONUCLEASE APOLLO"/>
    <property type="match status" value="1"/>
</dbReference>
<dbReference type="PANTHER" id="PTHR23240">
    <property type="entry name" value="DNA CROSS-LINK REPAIR PROTEIN PSO2/SNM1-RELATED"/>
    <property type="match status" value="1"/>
</dbReference>
<dbReference type="Pfam" id="PF07522">
    <property type="entry name" value="DRMBL"/>
    <property type="match status" value="1"/>
</dbReference>
<dbReference type="SUPFAM" id="SSF56281">
    <property type="entry name" value="Metallo-hydrolase/oxidoreductase"/>
    <property type="match status" value="1"/>
</dbReference>
<organism>
    <name type="scientific">Rattus norvegicus</name>
    <name type="common">Rat</name>
    <dbReference type="NCBI Taxonomy" id="10116"/>
    <lineage>
        <taxon>Eukaryota</taxon>
        <taxon>Metazoa</taxon>
        <taxon>Chordata</taxon>
        <taxon>Craniata</taxon>
        <taxon>Vertebrata</taxon>
        <taxon>Euteleostomi</taxon>
        <taxon>Mammalia</taxon>
        <taxon>Eutheria</taxon>
        <taxon>Euarchontoglires</taxon>
        <taxon>Glires</taxon>
        <taxon>Rodentia</taxon>
        <taxon>Myomorpha</taxon>
        <taxon>Muroidea</taxon>
        <taxon>Muridae</taxon>
        <taxon>Murinae</taxon>
        <taxon>Rattus</taxon>
    </lineage>
</organism>
<protein>
    <recommendedName>
        <fullName>5' exonuclease Apollo</fullName>
        <ecNumber>3.1.-.-</ecNumber>
    </recommendedName>
    <alternativeName>
        <fullName>Beta-lactamase MBLAC2</fullName>
        <ecNumber evidence="2">3.5.2.6</ecNumber>
    </alternativeName>
    <alternativeName>
        <fullName>DNA cross-link repair 1B protein</fullName>
    </alternativeName>
    <alternativeName>
        <fullName>SNM1 homolog B</fullName>
    </alternativeName>
</protein>
<keyword id="KW-0158">Chromosome</keyword>
<keyword id="KW-0963">Cytoplasm</keyword>
<keyword id="KW-0206">Cytoskeleton</keyword>
<keyword id="KW-0227">DNA damage</keyword>
<keyword id="KW-0234">DNA repair</keyword>
<keyword id="KW-0269">Exonuclease</keyword>
<keyword id="KW-0378">Hydrolase</keyword>
<keyword id="KW-1017">Isopeptide bond</keyword>
<keyword id="KW-0540">Nuclease</keyword>
<keyword id="KW-0539">Nucleus</keyword>
<keyword id="KW-1185">Reference proteome</keyword>
<keyword id="KW-0779">Telomere</keyword>
<keyword id="KW-0832">Ubl conjugation</keyword>
<sequence length="541" mass="60924">MNGVVIPQTPIAVDFWSLRRAGTARLFFLSHMHCDHTVGLSSTWARPLYCSPITAHLLHRRLQVSKQWIRALEIGESHVLLLDEIGQETMTVTLIDANHCPGSVMFLFEGYFGTILYTGDFRYTPSMLKEPALTLGKQIHTLYLDNTNCNPALVLPSRQEATQQIIQLIRQFPQHNIKIGLYSLGKESLLEQLALEFQTWVVLSPQRLELVQLLGLADVFTVEEEAGRIHAVDHMEICHSAMLQWNQTHPTIAIFPTSRKIRSPHPSIYSIPYSDHSSYSELRAFVAALRPCQVVPIVREQPCGEFFQDSLSPRLSMPLIPHSVQQYMSSSSRKTNVFWQLERRLKRPRTQGVVFESPEEKADQVKVDRDSKKHKKESLSPWAGCLSRLCPHPLQARKQLFPDFCRKEGDEPVLFCDSNKMATVLTAPLELSVQLQPVDEFPFPETREEIGLGSPLWSGGGSGSPTRGKQSNGMGCGSPPTHISRTTHLTPESGGLALKYLLTPVDFLQAGFSSRNFDQQVEKHQRVQCNNPAVMNTVDDV</sequence>
<proteinExistence type="evidence at protein level"/>